<reference key="1">
    <citation type="journal article" date="2009" name="PLoS ONE">
        <title>Salmonella paratyphi C: genetic divergence from Salmonella choleraesuis and pathogenic convergence with Salmonella typhi.</title>
        <authorList>
            <person name="Liu W.-Q."/>
            <person name="Feng Y."/>
            <person name="Wang Y."/>
            <person name="Zou Q.-H."/>
            <person name="Chen F."/>
            <person name="Guo J.-T."/>
            <person name="Peng Y.-H."/>
            <person name="Jin Y."/>
            <person name="Li Y.-G."/>
            <person name="Hu S.-N."/>
            <person name="Johnston R.N."/>
            <person name="Liu G.-R."/>
            <person name="Liu S.-L."/>
        </authorList>
    </citation>
    <scope>NUCLEOTIDE SEQUENCE [LARGE SCALE GENOMIC DNA]</scope>
    <source>
        <strain>RKS4594</strain>
    </source>
</reference>
<sequence length="251" mass="27487">MTEAQRHQILLDMLAQLGFVTVENVIERLGISPATARRDINKLDESGKLKKVRNGAEAITQQRPRWTPMNLHQAQNHDEKVRIAKAASQLVNPGESVVINCGSTAFLLGREMCGKPVQIITNYLPLANYLIDQEHDSVIIMGGQYNKSQSITLSPQGSENSLYAGHWMFTSGKGLTADGLYKTDMLTAMAEQKMLSVVGKLVALVDSSKIGERAGMLFSRADQIAMLITGKNANPQVLQQLEAQGVSILRV</sequence>
<organism>
    <name type="scientific">Salmonella paratyphi C (strain RKS4594)</name>
    <dbReference type="NCBI Taxonomy" id="476213"/>
    <lineage>
        <taxon>Bacteria</taxon>
        <taxon>Pseudomonadati</taxon>
        <taxon>Pseudomonadota</taxon>
        <taxon>Gammaproteobacteria</taxon>
        <taxon>Enterobacterales</taxon>
        <taxon>Enterobacteriaceae</taxon>
        <taxon>Salmonella</taxon>
    </lineage>
</organism>
<accession>C0Q6E8</accession>
<evidence type="ECO:0000255" key="1">
    <source>
        <dbReference type="HAMAP-Rule" id="MF_01563"/>
    </source>
</evidence>
<keyword id="KW-0963">Cytoplasm</keyword>
<keyword id="KW-0238">DNA-binding</keyword>
<keyword id="KW-0678">Repressor</keyword>
<keyword id="KW-0804">Transcription</keyword>
<keyword id="KW-0805">Transcription regulation</keyword>
<feature type="chain" id="PRO_1000185445" description="HTH-type transcriptional regulator UlaR">
    <location>
        <begin position="1"/>
        <end position="251"/>
    </location>
</feature>
<feature type="domain" description="HTH deoR-type" evidence="1">
    <location>
        <begin position="3"/>
        <end position="58"/>
    </location>
</feature>
<feature type="DNA-binding region" description="H-T-H motif" evidence="1">
    <location>
        <begin position="20"/>
        <end position="39"/>
    </location>
</feature>
<name>ULAR_SALPC</name>
<dbReference type="EMBL" id="CP000857">
    <property type="protein sequence ID" value="ACN48578.1"/>
    <property type="molecule type" value="Genomic_DNA"/>
</dbReference>
<dbReference type="RefSeq" id="WP_000133618.1">
    <property type="nucleotide sequence ID" value="NC_012125.1"/>
</dbReference>
<dbReference type="SMR" id="C0Q6E8"/>
<dbReference type="KEGG" id="sei:SPC_4528"/>
<dbReference type="HOGENOM" id="CLU_060699_3_2_6"/>
<dbReference type="Proteomes" id="UP000001599">
    <property type="component" value="Chromosome"/>
</dbReference>
<dbReference type="GO" id="GO:0005737">
    <property type="term" value="C:cytoplasm"/>
    <property type="evidence" value="ECO:0007669"/>
    <property type="project" value="UniProtKB-SubCell"/>
</dbReference>
<dbReference type="GO" id="GO:0003677">
    <property type="term" value="F:DNA binding"/>
    <property type="evidence" value="ECO:0007669"/>
    <property type="project" value="UniProtKB-KW"/>
</dbReference>
<dbReference type="GO" id="GO:0003700">
    <property type="term" value="F:DNA-binding transcription factor activity"/>
    <property type="evidence" value="ECO:0007669"/>
    <property type="project" value="InterPro"/>
</dbReference>
<dbReference type="GO" id="GO:0045892">
    <property type="term" value="P:negative regulation of DNA-templated transcription"/>
    <property type="evidence" value="ECO:0007669"/>
    <property type="project" value="UniProtKB-UniRule"/>
</dbReference>
<dbReference type="FunFam" id="1.10.10.10:FF:000160">
    <property type="entry name" value="HTH-type transcriptional regulator UlaR"/>
    <property type="match status" value="1"/>
</dbReference>
<dbReference type="Gene3D" id="1.10.10.10">
    <property type="entry name" value="Winged helix-like DNA-binding domain superfamily/Winged helix DNA-binding domain"/>
    <property type="match status" value="1"/>
</dbReference>
<dbReference type="HAMAP" id="MF_01563">
    <property type="entry name" value="HTH_type_UlaR"/>
    <property type="match status" value="1"/>
</dbReference>
<dbReference type="InterPro" id="IPR050313">
    <property type="entry name" value="Carb_Metab_HTH_regulators"/>
</dbReference>
<dbReference type="InterPro" id="IPR014036">
    <property type="entry name" value="DeoR-like_C"/>
</dbReference>
<dbReference type="InterPro" id="IPR001034">
    <property type="entry name" value="DeoR_HTH"/>
</dbReference>
<dbReference type="InterPro" id="IPR037171">
    <property type="entry name" value="NagB/RpiA_transferase-like"/>
</dbReference>
<dbReference type="InterPro" id="IPR018356">
    <property type="entry name" value="Tscrpt_reg_HTH_DeoR_CS"/>
</dbReference>
<dbReference type="InterPro" id="IPR023711">
    <property type="entry name" value="Tscrpt_reg_HTH_UlaR"/>
</dbReference>
<dbReference type="InterPro" id="IPR036388">
    <property type="entry name" value="WH-like_DNA-bd_sf"/>
</dbReference>
<dbReference type="InterPro" id="IPR036390">
    <property type="entry name" value="WH_DNA-bd_sf"/>
</dbReference>
<dbReference type="NCBIfam" id="NF010034">
    <property type="entry name" value="PRK13509.1"/>
    <property type="match status" value="1"/>
</dbReference>
<dbReference type="PANTHER" id="PTHR30363">
    <property type="entry name" value="HTH-TYPE TRANSCRIPTIONAL REGULATOR SRLR-RELATED"/>
    <property type="match status" value="1"/>
</dbReference>
<dbReference type="PANTHER" id="PTHR30363:SF55">
    <property type="entry name" value="HTH-TYPE TRANSCRIPTIONAL REGULATOR ULAR"/>
    <property type="match status" value="1"/>
</dbReference>
<dbReference type="Pfam" id="PF00455">
    <property type="entry name" value="DeoRC"/>
    <property type="match status" value="1"/>
</dbReference>
<dbReference type="Pfam" id="PF08220">
    <property type="entry name" value="HTH_DeoR"/>
    <property type="match status" value="1"/>
</dbReference>
<dbReference type="PRINTS" id="PR00037">
    <property type="entry name" value="HTHLACR"/>
</dbReference>
<dbReference type="SMART" id="SM01134">
    <property type="entry name" value="DeoRC"/>
    <property type="match status" value="1"/>
</dbReference>
<dbReference type="SMART" id="SM00420">
    <property type="entry name" value="HTH_DEOR"/>
    <property type="match status" value="1"/>
</dbReference>
<dbReference type="SUPFAM" id="SSF100950">
    <property type="entry name" value="NagB/RpiA/CoA transferase-like"/>
    <property type="match status" value="1"/>
</dbReference>
<dbReference type="SUPFAM" id="SSF46785">
    <property type="entry name" value="Winged helix' DNA-binding domain"/>
    <property type="match status" value="1"/>
</dbReference>
<dbReference type="PROSITE" id="PS00894">
    <property type="entry name" value="HTH_DEOR_1"/>
    <property type="match status" value="1"/>
</dbReference>
<dbReference type="PROSITE" id="PS51000">
    <property type="entry name" value="HTH_DEOR_2"/>
    <property type="match status" value="1"/>
</dbReference>
<comment type="function">
    <text evidence="1">Represses ulaG and the ulaABCDEF operon.</text>
</comment>
<comment type="subcellular location">
    <subcellularLocation>
        <location evidence="1">Cytoplasm</location>
    </subcellularLocation>
</comment>
<protein>
    <recommendedName>
        <fullName evidence="1">HTH-type transcriptional regulator UlaR</fullName>
    </recommendedName>
</protein>
<proteinExistence type="inferred from homology"/>
<gene>
    <name evidence="1" type="primary">ulaR</name>
    <name type="ordered locus">SPC_4528</name>
</gene>